<keyword id="KW-0067">ATP-binding</keyword>
<keyword id="KW-0963">Cytoplasm</keyword>
<keyword id="KW-0418">Kinase</keyword>
<keyword id="KW-0460">Magnesium</keyword>
<keyword id="KW-0479">Metal-binding</keyword>
<keyword id="KW-0546">Nucleotide metabolism</keyword>
<keyword id="KW-0547">Nucleotide-binding</keyword>
<keyword id="KW-0597">Phosphoprotein</keyword>
<keyword id="KW-0808">Transferase</keyword>
<reference key="1">
    <citation type="submission" date="2005-07" db="EMBL/GenBank/DDBJ databases">
        <title>Complete sequence of Synechococcus sp. CC9605.</title>
        <authorList>
            <consortium name="US DOE Joint Genome Institute"/>
            <person name="Copeland A."/>
            <person name="Lucas S."/>
            <person name="Lapidus A."/>
            <person name="Barry K."/>
            <person name="Detter J.C."/>
            <person name="Glavina T."/>
            <person name="Hammon N."/>
            <person name="Israni S."/>
            <person name="Pitluck S."/>
            <person name="Schmutz J."/>
            <person name="Martinez M."/>
            <person name="Larimer F."/>
            <person name="Land M."/>
            <person name="Kyrpides N."/>
            <person name="Ivanova N."/>
            <person name="Richardson P."/>
        </authorList>
    </citation>
    <scope>NUCLEOTIDE SEQUENCE [LARGE SCALE GENOMIC DNA]</scope>
    <source>
        <strain>CC9605</strain>
    </source>
</reference>
<protein>
    <recommendedName>
        <fullName evidence="3">Nucleoside diphosphate kinase</fullName>
        <shortName evidence="3">NDK</shortName>
        <shortName evidence="3">NDP kinase</shortName>
        <ecNumber evidence="3">2.7.4.6</ecNumber>
    </recommendedName>
    <alternativeName>
        <fullName evidence="3">Nucleoside-2-P kinase</fullName>
    </alternativeName>
</protein>
<sequence>MAERTFIAIKPDGVQRGLVGEILGRFERKGFKLVGLKQITPSRALAEQHYGVHKERPFFAGLVDFITSGPVVAMVWEGDGVIASARKLIGATKPLEAEPGTIRGDLAVNIGRNVIHGSDAAETAQFEIGLWFQASELNDWSPSDQGWRVEG</sequence>
<dbReference type="EC" id="2.7.4.6" evidence="3"/>
<dbReference type="EMBL" id="CP000110">
    <property type="protein sequence ID" value="ABB36242.1"/>
    <property type="molecule type" value="Genomic_DNA"/>
</dbReference>
<dbReference type="RefSeq" id="WP_011365437.1">
    <property type="nucleotide sequence ID" value="NC_007516.1"/>
</dbReference>
<dbReference type="SMR" id="Q3AGP0"/>
<dbReference type="STRING" id="110662.Syncc9605_2512"/>
<dbReference type="KEGG" id="syd:Syncc9605_2512"/>
<dbReference type="eggNOG" id="COG0105">
    <property type="taxonomic scope" value="Bacteria"/>
</dbReference>
<dbReference type="HOGENOM" id="CLU_060216_6_3_3"/>
<dbReference type="OrthoDB" id="9801161at2"/>
<dbReference type="GO" id="GO:0005737">
    <property type="term" value="C:cytoplasm"/>
    <property type="evidence" value="ECO:0007669"/>
    <property type="project" value="UniProtKB-SubCell"/>
</dbReference>
<dbReference type="GO" id="GO:0005524">
    <property type="term" value="F:ATP binding"/>
    <property type="evidence" value="ECO:0007669"/>
    <property type="project" value="UniProtKB-UniRule"/>
</dbReference>
<dbReference type="GO" id="GO:0046872">
    <property type="term" value="F:metal ion binding"/>
    <property type="evidence" value="ECO:0007669"/>
    <property type="project" value="UniProtKB-KW"/>
</dbReference>
<dbReference type="GO" id="GO:0004550">
    <property type="term" value="F:nucleoside diphosphate kinase activity"/>
    <property type="evidence" value="ECO:0007669"/>
    <property type="project" value="UniProtKB-UniRule"/>
</dbReference>
<dbReference type="GO" id="GO:0006241">
    <property type="term" value="P:CTP biosynthetic process"/>
    <property type="evidence" value="ECO:0007669"/>
    <property type="project" value="UniProtKB-UniRule"/>
</dbReference>
<dbReference type="GO" id="GO:0006183">
    <property type="term" value="P:GTP biosynthetic process"/>
    <property type="evidence" value="ECO:0007669"/>
    <property type="project" value="UniProtKB-UniRule"/>
</dbReference>
<dbReference type="GO" id="GO:0006228">
    <property type="term" value="P:UTP biosynthetic process"/>
    <property type="evidence" value="ECO:0007669"/>
    <property type="project" value="UniProtKB-UniRule"/>
</dbReference>
<dbReference type="CDD" id="cd04413">
    <property type="entry name" value="NDPk_I"/>
    <property type="match status" value="1"/>
</dbReference>
<dbReference type="FunFam" id="3.30.70.141:FF:000002">
    <property type="entry name" value="Nucleoside diphosphate kinase"/>
    <property type="match status" value="1"/>
</dbReference>
<dbReference type="Gene3D" id="3.30.70.141">
    <property type="entry name" value="Nucleoside diphosphate kinase-like domain"/>
    <property type="match status" value="1"/>
</dbReference>
<dbReference type="HAMAP" id="MF_00451">
    <property type="entry name" value="NDP_kinase"/>
    <property type="match status" value="1"/>
</dbReference>
<dbReference type="InterPro" id="IPR034907">
    <property type="entry name" value="NDK-like_dom"/>
</dbReference>
<dbReference type="InterPro" id="IPR036850">
    <property type="entry name" value="NDK-like_dom_sf"/>
</dbReference>
<dbReference type="InterPro" id="IPR001564">
    <property type="entry name" value="Nucleoside_diP_kinase"/>
</dbReference>
<dbReference type="NCBIfam" id="NF001908">
    <property type="entry name" value="PRK00668.1"/>
    <property type="match status" value="1"/>
</dbReference>
<dbReference type="PANTHER" id="PTHR11349">
    <property type="entry name" value="NUCLEOSIDE DIPHOSPHATE KINASE"/>
    <property type="match status" value="1"/>
</dbReference>
<dbReference type="Pfam" id="PF00334">
    <property type="entry name" value="NDK"/>
    <property type="match status" value="1"/>
</dbReference>
<dbReference type="PRINTS" id="PR01243">
    <property type="entry name" value="NUCDPKINASE"/>
</dbReference>
<dbReference type="SMART" id="SM00562">
    <property type="entry name" value="NDK"/>
    <property type="match status" value="1"/>
</dbReference>
<dbReference type="SUPFAM" id="SSF54919">
    <property type="entry name" value="Nucleoside diphosphate kinase, NDK"/>
    <property type="match status" value="1"/>
</dbReference>
<dbReference type="PROSITE" id="PS51374">
    <property type="entry name" value="NDPK_LIKE"/>
    <property type="match status" value="1"/>
</dbReference>
<proteinExistence type="inferred from homology"/>
<gene>
    <name evidence="3" type="primary">ndk</name>
    <name type="ordered locus">Syncc9605_2512</name>
</gene>
<name>NDK_SYNSC</name>
<feature type="chain" id="PRO_0000242519" description="Nucleoside diphosphate kinase">
    <location>
        <begin position="1"/>
        <end position="151"/>
    </location>
</feature>
<feature type="active site" description="Pros-phosphohistidine intermediate" evidence="3">
    <location>
        <position position="116"/>
    </location>
</feature>
<feature type="binding site" evidence="3">
    <location>
        <position position="10"/>
    </location>
    <ligand>
        <name>ATP</name>
        <dbReference type="ChEBI" id="CHEBI:30616"/>
    </ligand>
</feature>
<feature type="binding site" evidence="3">
    <location>
        <position position="58"/>
    </location>
    <ligand>
        <name>ATP</name>
        <dbReference type="ChEBI" id="CHEBI:30616"/>
    </ligand>
</feature>
<feature type="binding site" evidence="3">
    <location>
        <position position="86"/>
    </location>
    <ligand>
        <name>ATP</name>
        <dbReference type="ChEBI" id="CHEBI:30616"/>
    </ligand>
</feature>
<feature type="binding site" evidence="3">
    <location>
        <position position="92"/>
    </location>
    <ligand>
        <name>ATP</name>
        <dbReference type="ChEBI" id="CHEBI:30616"/>
    </ligand>
</feature>
<feature type="binding site" evidence="3">
    <location>
        <position position="103"/>
    </location>
    <ligand>
        <name>ATP</name>
        <dbReference type="ChEBI" id="CHEBI:30616"/>
    </ligand>
</feature>
<feature type="binding site" evidence="3">
    <location>
        <position position="113"/>
    </location>
    <ligand>
        <name>ATP</name>
        <dbReference type="ChEBI" id="CHEBI:30616"/>
    </ligand>
</feature>
<comment type="function">
    <text evidence="3">Major role in the synthesis of nucleoside triphosphates other than ATP. The ATP gamma phosphate is transferred to the NDP beta phosphate via a ping-pong mechanism, using a phosphorylated active-site intermediate.</text>
</comment>
<comment type="function">
    <text evidence="1">(Microbial infection) Catalyzes the phosphorylation of dZDP to dZTP, when the bacterium is infected by a phage that produces the substrate for the synthesis of dZTP (2- amino-2'-deoxyadenosine 5'-triphosphate), which is then used by the phage as a DNA polymerase substrate.</text>
</comment>
<comment type="catalytic activity">
    <reaction evidence="2">
        <text>dZDP + ATP = dZTP + ADP</text>
        <dbReference type="Rhea" id="RHEA:67644"/>
        <dbReference type="ChEBI" id="CHEBI:30616"/>
        <dbReference type="ChEBI" id="CHEBI:172929"/>
        <dbReference type="ChEBI" id="CHEBI:172931"/>
        <dbReference type="ChEBI" id="CHEBI:456216"/>
    </reaction>
</comment>
<comment type="catalytic activity">
    <reaction evidence="3">
        <text>a 2'-deoxyribonucleoside 5'-diphosphate + ATP = a 2'-deoxyribonucleoside 5'-triphosphate + ADP</text>
        <dbReference type="Rhea" id="RHEA:44640"/>
        <dbReference type="ChEBI" id="CHEBI:30616"/>
        <dbReference type="ChEBI" id="CHEBI:61560"/>
        <dbReference type="ChEBI" id="CHEBI:73316"/>
        <dbReference type="ChEBI" id="CHEBI:456216"/>
        <dbReference type="EC" id="2.7.4.6"/>
    </reaction>
</comment>
<comment type="catalytic activity">
    <reaction evidence="3">
        <text>a ribonucleoside 5'-diphosphate + ATP = a ribonucleoside 5'-triphosphate + ADP</text>
        <dbReference type="Rhea" id="RHEA:18113"/>
        <dbReference type="ChEBI" id="CHEBI:30616"/>
        <dbReference type="ChEBI" id="CHEBI:57930"/>
        <dbReference type="ChEBI" id="CHEBI:61557"/>
        <dbReference type="ChEBI" id="CHEBI:456216"/>
        <dbReference type="EC" id="2.7.4.6"/>
    </reaction>
</comment>
<comment type="cofactor">
    <cofactor evidence="3">
        <name>Mg(2+)</name>
        <dbReference type="ChEBI" id="CHEBI:18420"/>
    </cofactor>
</comment>
<comment type="pathway">
    <text evidence="2">Purine metabolism.</text>
</comment>
<comment type="subunit">
    <text evidence="3">Homotetramer.</text>
</comment>
<comment type="subcellular location">
    <subcellularLocation>
        <location evidence="3">Cytoplasm</location>
    </subcellularLocation>
</comment>
<comment type="similarity">
    <text evidence="3">Belongs to the NDK family.</text>
</comment>
<organism>
    <name type="scientific">Synechococcus sp. (strain CC9605)</name>
    <dbReference type="NCBI Taxonomy" id="110662"/>
    <lineage>
        <taxon>Bacteria</taxon>
        <taxon>Bacillati</taxon>
        <taxon>Cyanobacteriota</taxon>
        <taxon>Cyanophyceae</taxon>
        <taxon>Synechococcales</taxon>
        <taxon>Synechococcaceae</taxon>
        <taxon>Synechococcus</taxon>
    </lineage>
</organism>
<evidence type="ECO:0000250" key="1">
    <source>
        <dbReference type="UniProtKB" id="Q9KNM4"/>
    </source>
</evidence>
<evidence type="ECO:0000250" key="2">
    <source>
        <dbReference type="UniProtKB" id="Q9KTX4"/>
    </source>
</evidence>
<evidence type="ECO:0000255" key="3">
    <source>
        <dbReference type="HAMAP-Rule" id="MF_00451"/>
    </source>
</evidence>
<accession>Q3AGP0</accession>